<dbReference type="EMBL" id="CP000927">
    <property type="protein sequence ID" value="ABZ73045.1"/>
    <property type="molecule type" value="Genomic_DNA"/>
</dbReference>
<dbReference type="STRING" id="366602.Caul_3920"/>
<dbReference type="KEGG" id="cak:Caul_3920"/>
<dbReference type="eggNOG" id="COG2983">
    <property type="taxonomic scope" value="Bacteria"/>
</dbReference>
<dbReference type="HOGENOM" id="CLU_109769_0_1_5"/>
<dbReference type="OrthoDB" id="9786855at2"/>
<dbReference type="HAMAP" id="MF_00676">
    <property type="entry name" value="UPF0260"/>
    <property type="match status" value="1"/>
</dbReference>
<dbReference type="InterPro" id="IPR005358">
    <property type="entry name" value="Puta_zinc/iron-chelating_dom"/>
</dbReference>
<dbReference type="InterPro" id="IPR008228">
    <property type="entry name" value="UCP006173"/>
</dbReference>
<dbReference type="NCBIfam" id="NF003501">
    <property type="entry name" value="PRK05170.1-5"/>
    <property type="match status" value="1"/>
</dbReference>
<dbReference type="NCBIfam" id="NF003507">
    <property type="entry name" value="PRK05170.2-5"/>
    <property type="match status" value="1"/>
</dbReference>
<dbReference type="PANTHER" id="PTHR37421">
    <property type="entry name" value="UPF0260 PROTEIN YCGN"/>
    <property type="match status" value="1"/>
</dbReference>
<dbReference type="PANTHER" id="PTHR37421:SF1">
    <property type="entry name" value="UPF0260 PROTEIN YCGN"/>
    <property type="match status" value="1"/>
</dbReference>
<dbReference type="Pfam" id="PF03692">
    <property type="entry name" value="CxxCxxCC"/>
    <property type="match status" value="1"/>
</dbReference>
<dbReference type="PIRSF" id="PIRSF006173">
    <property type="entry name" value="UCP006173"/>
    <property type="match status" value="1"/>
</dbReference>
<name>Y3920_CAUSK</name>
<evidence type="ECO:0000255" key="1">
    <source>
        <dbReference type="HAMAP-Rule" id="MF_00676"/>
    </source>
</evidence>
<organism>
    <name type="scientific">Caulobacter sp. (strain K31)</name>
    <dbReference type="NCBI Taxonomy" id="366602"/>
    <lineage>
        <taxon>Bacteria</taxon>
        <taxon>Pseudomonadati</taxon>
        <taxon>Pseudomonadota</taxon>
        <taxon>Alphaproteobacteria</taxon>
        <taxon>Caulobacterales</taxon>
        <taxon>Caulobacteraceae</taxon>
        <taxon>Caulobacter</taxon>
    </lineage>
</organism>
<gene>
    <name type="ordered locus">Caul_3920</name>
</gene>
<protein>
    <recommendedName>
        <fullName evidence="1">UPF0260 protein Caul_3920</fullName>
    </recommendedName>
</protein>
<reference key="1">
    <citation type="submission" date="2008-01" db="EMBL/GenBank/DDBJ databases">
        <title>Complete sequence of chromosome of Caulobacter sp. K31.</title>
        <authorList>
            <consortium name="US DOE Joint Genome Institute"/>
            <person name="Copeland A."/>
            <person name="Lucas S."/>
            <person name="Lapidus A."/>
            <person name="Barry K."/>
            <person name="Glavina del Rio T."/>
            <person name="Dalin E."/>
            <person name="Tice H."/>
            <person name="Pitluck S."/>
            <person name="Bruce D."/>
            <person name="Goodwin L."/>
            <person name="Thompson L.S."/>
            <person name="Brettin T."/>
            <person name="Detter J.C."/>
            <person name="Han C."/>
            <person name="Schmutz J."/>
            <person name="Larimer F."/>
            <person name="Land M."/>
            <person name="Hauser L."/>
            <person name="Kyrpides N."/>
            <person name="Kim E."/>
            <person name="Stephens C."/>
            <person name="Richardson P."/>
        </authorList>
    </citation>
    <scope>NUCLEOTIDE SEQUENCE [LARGE SCALE GENOMIC DNA]</scope>
    <source>
        <strain>K31</strain>
    </source>
</reference>
<sequence>MTARKPFWETKSLNQMTVPEWESLCDGCGLCCLVRFEDEDTGEIIPTRVHCQLFDEHRCTCKDYANRKKTVPDCIKLTPHNIETLEWMPPSCAYRRLHEGKTLPLWHPLITGDRESVHQAGVSVRDQTVSELSFSDPEDALDFVATDLMYDKSDVDWDPEEP</sequence>
<feature type="chain" id="PRO_1000082969" description="UPF0260 protein Caul_3920">
    <location>
        <begin position="1"/>
        <end position="162"/>
    </location>
</feature>
<proteinExistence type="inferred from homology"/>
<comment type="similarity">
    <text evidence="1">Belongs to the UPF0260 family.</text>
</comment>
<accession>B0SW01</accession>